<feature type="chain" id="PRO_0000063628" description="Chaperonin GroEL, chloroplastic">
    <location>
        <begin position="1"/>
        <end position="585"/>
    </location>
</feature>
<feature type="binding site" evidence="1">
    <location>
        <begin position="55"/>
        <end position="58"/>
    </location>
    <ligand>
        <name>ATP</name>
        <dbReference type="ChEBI" id="CHEBI:30616"/>
    </ligand>
</feature>
<feature type="binding site" evidence="1">
    <location>
        <begin position="113"/>
        <end position="117"/>
    </location>
    <ligand>
        <name>ATP</name>
        <dbReference type="ChEBI" id="CHEBI:30616"/>
    </ligand>
</feature>
<feature type="binding site" evidence="1">
    <location>
        <position position="442"/>
    </location>
    <ligand>
        <name>ATP</name>
        <dbReference type="ChEBI" id="CHEBI:30616"/>
    </ligand>
</feature>
<feature type="binding site" evidence="1">
    <location>
        <begin position="507"/>
        <end position="509"/>
    </location>
    <ligand>
        <name>ATP</name>
        <dbReference type="ChEBI" id="CHEBI:30616"/>
    </ligand>
</feature>
<feature type="binding site" evidence="1">
    <location>
        <position position="523"/>
    </location>
    <ligand>
        <name>ATP</name>
        <dbReference type="ChEBI" id="CHEBI:30616"/>
    </ligand>
</feature>
<protein>
    <recommendedName>
        <fullName evidence="1">Chaperonin GroEL, chloroplastic</fullName>
        <ecNumber evidence="1">5.6.1.7</ecNumber>
    </recommendedName>
    <alternativeName>
        <fullName evidence="1">60 kDa chaperonin</fullName>
    </alternativeName>
    <alternativeName>
        <fullName evidence="1">Chaperonin-60</fullName>
        <shortName evidence="1">Cpn60</shortName>
    </alternativeName>
</protein>
<geneLocation type="chloroplast"/>
<dbReference type="EC" id="5.6.1.7" evidence="1"/>
<dbReference type="EMBL" id="X81356">
    <property type="protein sequence ID" value="CAA57124.1"/>
    <property type="molecule type" value="Genomic_DNA"/>
</dbReference>
<dbReference type="PIR" id="S49253">
    <property type="entry name" value="S49253"/>
</dbReference>
<dbReference type="SMR" id="P46224"/>
<dbReference type="GO" id="GO:0009507">
    <property type="term" value="C:chloroplast"/>
    <property type="evidence" value="ECO:0007669"/>
    <property type="project" value="UniProtKB-SubCell"/>
</dbReference>
<dbReference type="GO" id="GO:0005524">
    <property type="term" value="F:ATP binding"/>
    <property type="evidence" value="ECO:0007669"/>
    <property type="project" value="UniProtKB-UniRule"/>
</dbReference>
<dbReference type="GO" id="GO:0140662">
    <property type="term" value="F:ATP-dependent protein folding chaperone"/>
    <property type="evidence" value="ECO:0007669"/>
    <property type="project" value="InterPro"/>
</dbReference>
<dbReference type="GO" id="GO:0016853">
    <property type="term" value="F:isomerase activity"/>
    <property type="evidence" value="ECO:0007669"/>
    <property type="project" value="UniProtKB-KW"/>
</dbReference>
<dbReference type="GO" id="GO:0016730">
    <property type="term" value="F:oxidoreductase activity, acting on iron-sulfur proteins as donors"/>
    <property type="evidence" value="ECO:0007669"/>
    <property type="project" value="InterPro"/>
</dbReference>
<dbReference type="GO" id="GO:0051082">
    <property type="term" value="F:unfolded protein binding"/>
    <property type="evidence" value="ECO:0007669"/>
    <property type="project" value="UniProtKB-UniRule"/>
</dbReference>
<dbReference type="GO" id="GO:0042026">
    <property type="term" value="P:protein refolding"/>
    <property type="evidence" value="ECO:0007669"/>
    <property type="project" value="UniProtKB-UniRule"/>
</dbReference>
<dbReference type="CDD" id="cd03344">
    <property type="entry name" value="GroEL"/>
    <property type="match status" value="1"/>
</dbReference>
<dbReference type="FunFam" id="3.50.7.10:FF:000001">
    <property type="entry name" value="60 kDa chaperonin"/>
    <property type="match status" value="1"/>
</dbReference>
<dbReference type="Gene3D" id="3.50.7.10">
    <property type="entry name" value="GroEL"/>
    <property type="match status" value="1"/>
</dbReference>
<dbReference type="Gene3D" id="1.10.560.10">
    <property type="entry name" value="GroEL-like equatorial domain"/>
    <property type="match status" value="1"/>
</dbReference>
<dbReference type="Gene3D" id="3.30.260.10">
    <property type="entry name" value="TCP-1-like chaperonin intermediate domain"/>
    <property type="match status" value="1"/>
</dbReference>
<dbReference type="HAMAP" id="MF_00600">
    <property type="entry name" value="CH60"/>
    <property type="match status" value="1"/>
</dbReference>
<dbReference type="InterPro" id="IPR018370">
    <property type="entry name" value="Chaperonin_Cpn60_CS"/>
</dbReference>
<dbReference type="InterPro" id="IPR001844">
    <property type="entry name" value="Cpn60/GroEL"/>
</dbReference>
<dbReference type="InterPro" id="IPR002423">
    <property type="entry name" value="Cpn60/GroEL/TCP-1"/>
</dbReference>
<dbReference type="InterPro" id="IPR036644">
    <property type="entry name" value="FTR_bsu_sf"/>
</dbReference>
<dbReference type="InterPro" id="IPR027409">
    <property type="entry name" value="GroEL-like_apical_dom_sf"/>
</dbReference>
<dbReference type="InterPro" id="IPR027413">
    <property type="entry name" value="GROEL-like_equatorial_sf"/>
</dbReference>
<dbReference type="InterPro" id="IPR027410">
    <property type="entry name" value="TCP-1-like_intermed_sf"/>
</dbReference>
<dbReference type="NCBIfam" id="TIGR02348">
    <property type="entry name" value="GroEL"/>
    <property type="match status" value="1"/>
</dbReference>
<dbReference type="NCBIfam" id="NF000592">
    <property type="entry name" value="PRK00013.1"/>
    <property type="match status" value="1"/>
</dbReference>
<dbReference type="NCBIfam" id="NF009487">
    <property type="entry name" value="PRK12849.1"/>
    <property type="match status" value="1"/>
</dbReference>
<dbReference type="NCBIfam" id="NF009488">
    <property type="entry name" value="PRK12850.1"/>
    <property type="match status" value="1"/>
</dbReference>
<dbReference type="NCBIfam" id="NF009489">
    <property type="entry name" value="PRK12851.1"/>
    <property type="match status" value="1"/>
</dbReference>
<dbReference type="PANTHER" id="PTHR45633">
    <property type="entry name" value="60 KDA HEAT SHOCK PROTEIN, MITOCHONDRIAL"/>
    <property type="match status" value="1"/>
</dbReference>
<dbReference type="Pfam" id="PF00118">
    <property type="entry name" value="Cpn60_TCP1"/>
    <property type="match status" value="1"/>
</dbReference>
<dbReference type="PRINTS" id="PR00298">
    <property type="entry name" value="CHAPERONIN60"/>
</dbReference>
<dbReference type="SUPFAM" id="SSF57662">
    <property type="entry name" value="Ferredoxin thioredoxin reductase (FTR), catalytic beta chain"/>
    <property type="match status" value="1"/>
</dbReference>
<dbReference type="SUPFAM" id="SSF52029">
    <property type="entry name" value="GroEL apical domain-like"/>
    <property type="match status" value="1"/>
</dbReference>
<dbReference type="SUPFAM" id="SSF48592">
    <property type="entry name" value="GroEL equatorial domain-like"/>
    <property type="match status" value="1"/>
</dbReference>
<dbReference type="SUPFAM" id="SSF54849">
    <property type="entry name" value="GroEL-intermediate domain like"/>
    <property type="match status" value="1"/>
</dbReference>
<dbReference type="PROSITE" id="PS00296">
    <property type="entry name" value="CHAPERONINS_CPN60"/>
    <property type="match status" value="1"/>
</dbReference>
<keyword id="KW-0067">ATP-binding</keyword>
<keyword id="KW-0143">Chaperone</keyword>
<keyword id="KW-0150">Chloroplast</keyword>
<keyword id="KW-0413">Isomerase</keyword>
<keyword id="KW-0547">Nucleotide-binding</keyword>
<keyword id="KW-0934">Plastid</keyword>
<gene>
    <name evidence="1" type="primary">groEL</name>
    <name type="synonym">cpn60</name>
    <name evidence="1" type="synonym">groL</name>
</gene>
<reference key="1">
    <citation type="journal article" date="1995" name="Mol. Gen. Genet.">
        <title>Twintrons are not unique to the Euglena chloroplast genome: structure and evolution of a plastome cpn60 gene from a cryptomonad.</title>
        <authorList>
            <person name="Maier U.-G."/>
            <person name="Rensing S.A."/>
            <person name="Igloi G.L."/>
            <person name="Maerz M."/>
        </authorList>
    </citation>
    <scope>NUCLEOTIDE SEQUENCE [GENOMIC DNA]</scope>
</reference>
<organism>
    <name type="scientific">Pyrenomonas salina</name>
    <dbReference type="NCBI Taxonomy" id="3034"/>
    <lineage>
        <taxon>Eukaryota</taxon>
        <taxon>Cryptophyceae</taxon>
        <taxon>Pyrenomonadales</taxon>
        <taxon>Pyrenomonadaceae</taxon>
        <taxon>Pyrenomonas</taxon>
    </lineage>
</organism>
<accession>P46224</accession>
<proteinExistence type="inferred from homology"/>
<name>CH60_PYRSA</name>
<comment type="function">
    <text evidence="1">Together with its co-chaperonin GroES, plays an essential role in assisting protein folding. The GroEL-GroES system forms a nano-cage that allows encapsulation of the non-native substrate proteins and provides a physical environment optimized to promote and accelerate protein folding.</text>
</comment>
<comment type="catalytic activity">
    <reaction evidence="1">
        <text>ATP + H2O + a folded polypeptide = ADP + phosphate + an unfolded polypeptide.</text>
        <dbReference type="EC" id="5.6.1.7"/>
    </reaction>
</comment>
<comment type="subunit">
    <text evidence="1">Forms a cylinder of 14 subunits composed of two heptameric rings stacked back-to-back. Interacts with the co-chaperonin GroES.</text>
</comment>
<comment type="subcellular location">
    <subcellularLocation>
        <location evidence="1">Plastid</location>
        <location evidence="1">Chloroplast</location>
    </subcellularLocation>
</comment>
<comment type="similarity">
    <text evidence="1">Belongs to the chaperonin (HSP60) family.</text>
</comment>
<sequence>MRRFSETYGQKKQITFFCSNLSITAVVIEGLLKHKEEYGALERGMDILAEAVSVTLGPKGRNVVLESGKYGPPQIVNDGVTIAKEIELEDHIENTGVALIRQAASKTNDVAGDGTTTATVLAHAMVKQGMKNVRCRSKSIAIKRGIEKATQFVISQIAEYSRPVEDTKSITQVAAISAGNDMEVGQMIADAIEKVGREGVISLEEGKSTVTELELTEGNGWFLKKGFISPYFVTDTDRMETTQENPYILLTDKKISLVQELVPIHLELISKTSRPLLIIAEDVEKEALATLVVNKLRGIVNVVAVRAPGFGDRRKTMLEDIAILTGGQVISEDAGFSLETVQLDMLGQARRITVVKEGTTIIAEGHEREVKARCEQIRRQIEASESSYEREKLQERLAKLAGGVAVIKVGAATETEKDKKLRLEDAINATKAAVEEGIVPGGATLIHFIEDLNDWAEDNLLDDELIGALIVEKALSAPMKRIIENTGISSSIIIEKIKDKDFSIGYNAAQGEIEDMYEIGVIDPAKVTRSAMQNAASIASMILTTECIVVDKKKTCSLETSIYWLVLTNKYFCLDLLRLYFFLKD</sequence>
<evidence type="ECO:0000255" key="1">
    <source>
        <dbReference type="HAMAP-Rule" id="MF_00600"/>
    </source>
</evidence>